<evidence type="ECO:0000250" key="1"/>
<evidence type="ECO:0000250" key="2">
    <source>
        <dbReference type="UniProtKB" id="P00157"/>
    </source>
</evidence>
<evidence type="ECO:0000255" key="3">
    <source>
        <dbReference type="PROSITE-ProRule" id="PRU00968"/>
    </source>
</evidence>
<dbReference type="EMBL" id="U04542">
    <property type="protein sequence ID" value="AAA56785.1"/>
    <property type="molecule type" value="Genomic_DNA"/>
</dbReference>
<dbReference type="EMBL" id="M64905">
    <property type="protein sequence ID" value="AAB01471.1"/>
    <property type="molecule type" value="Genomic_DNA"/>
</dbReference>
<dbReference type="SMR" id="P29668"/>
<dbReference type="GO" id="GO:0005743">
    <property type="term" value="C:mitochondrial inner membrane"/>
    <property type="evidence" value="ECO:0007669"/>
    <property type="project" value="UniProtKB-SubCell"/>
</dbReference>
<dbReference type="GO" id="GO:0046872">
    <property type="term" value="F:metal ion binding"/>
    <property type="evidence" value="ECO:0007669"/>
    <property type="project" value="UniProtKB-KW"/>
</dbReference>
<dbReference type="GO" id="GO:0008121">
    <property type="term" value="F:ubiquinol-cytochrome-c reductase activity"/>
    <property type="evidence" value="ECO:0007669"/>
    <property type="project" value="TreeGrafter"/>
</dbReference>
<dbReference type="GO" id="GO:0006122">
    <property type="term" value="P:mitochondrial electron transport, ubiquinol to cytochrome c"/>
    <property type="evidence" value="ECO:0007669"/>
    <property type="project" value="TreeGrafter"/>
</dbReference>
<dbReference type="Gene3D" id="1.20.810.10">
    <property type="entry name" value="Cytochrome Bc1 Complex, Chain C"/>
    <property type="match status" value="1"/>
</dbReference>
<dbReference type="InterPro" id="IPR005797">
    <property type="entry name" value="Cyt_b/b6_N"/>
</dbReference>
<dbReference type="InterPro" id="IPR027387">
    <property type="entry name" value="Cytb/b6-like_sf"/>
</dbReference>
<dbReference type="InterPro" id="IPR016174">
    <property type="entry name" value="Di-haem_cyt_TM"/>
</dbReference>
<dbReference type="PANTHER" id="PTHR19271">
    <property type="entry name" value="CYTOCHROME B"/>
    <property type="match status" value="1"/>
</dbReference>
<dbReference type="PANTHER" id="PTHR19271:SF16">
    <property type="entry name" value="CYTOCHROME B"/>
    <property type="match status" value="1"/>
</dbReference>
<dbReference type="Pfam" id="PF00033">
    <property type="entry name" value="Cytochrome_B"/>
    <property type="match status" value="1"/>
</dbReference>
<dbReference type="SUPFAM" id="SSF81342">
    <property type="entry name" value="Transmembrane di-heme cytochromes"/>
    <property type="match status" value="1"/>
</dbReference>
<dbReference type="PROSITE" id="PS51002">
    <property type="entry name" value="CYTB_NTER"/>
    <property type="match status" value="1"/>
</dbReference>
<keyword id="KW-0249">Electron transport</keyword>
<keyword id="KW-0349">Heme</keyword>
<keyword id="KW-0408">Iron</keyword>
<keyword id="KW-0472">Membrane</keyword>
<keyword id="KW-0479">Metal-binding</keyword>
<keyword id="KW-0496">Mitochondrion</keyword>
<keyword id="KW-0999">Mitochondrion inner membrane</keyword>
<keyword id="KW-0679">Respiratory chain</keyword>
<keyword id="KW-0812">Transmembrane</keyword>
<keyword id="KW-1133">Transmembrane helix</keyword>
<keyword id="KW-0813">Transport</keyword>
<keyword id="KW-0830">Ubiquinone</keyword>
<proteinExistence type="inferred from homology"/>
<name>CYB_MEGAT</name>
<protein>
    <recommendedName>
        <fullName>Cytochrome b</fullName>
    </recommendedName>
    <alternativeName>
        <fullName>Complex III subunit 3</fullName>
    </alternativeName>
    <alternativeName>
        <fullName>Complex III subunit III</fullName>
    </alternativeName>
    <alternativeName>
        <fullName>Cytochrome b-c1 complex subunit 3</fullName>
    </alternativeName>
    <alternativeName>
        <fullName>Ubiquinol-cytochrome-c reductase complex cytochrome b subunit</fullName>
    </alternativeName>
</protein>
<geneLocation type="mitochondrion"/>
<gene>
    <name type="primary">mt-cyb</name>
    <name type="synonym">cob</name>
    <name type="synonym">cytb</name>
    <name type="synonym">mtcyb</name>
</gene>
<accession>P29668</accession>
<reference key="1">
    <citation type="submission" date="1994-12" db="EMBL/GenBank/DDBJ databases">
        <authorList>
            <person name="Bert T.M."/>
            <person name="Seyoum S."/>
        </authorList>
    </citation>
    <scope>NUCLEOTIDE SEQUENCE [GENOMIC DNA]</scope>
</reference>
<reference key="2">
    <citation type="journal article" date="1991" name="Mol. Biol. Evol.">
        <title>Phylogenetic relationships of neopterygian fishes, inferred from mitochondrial DNA sequences.</title>
        <authorList>
            <person name="Normark B.B."/>
            <person name="McCune A.R."/>
            <person name="Harrison R.G."/>
        </authorList>
    </citation>
    <scope>NUCLEOTIDE SEQUENCE [GENOMIC DNA] OF 1-98</scope>
</reference>
<comment type="function">
    <text evidence="2">Component of the ubiquinol-cytochrome c reductase complex (complex III or cytochrome b-c1 complex) that is part of the mitochondrial respiratory chain. The b-c1 complex mediates electron transfer from ubiquinol to cytochrome c. Contributes to the generation of a proton gradient across the mitochondrial membrane that is then used for ATP synthesis.</text>
</comment>
<comment type="cofactor">
    <cofactor evidence="2">
        <name>heme b</name>
        <dbReference type="ChEBI" id="CHEBI:60344"/>
    </cofactor>
    <text evidence="2">Binds 2 heme b groups non-covalently.</text>
</comment>
<comment type="subunit">
    <text evidence="2">The cytochrome bc1 complex contains 3 respiratory subunits (MT-CYB, CYC1 and UQCRFS1), 2 core proteins (UQCRC1 and UQCRC2) and probably 6 low-molecular weight proteins.</text>
</comment>
<comment type="subcellular location">
    <subcellularLocation>
        <location evidence="2">Mitochondrion inner membrane</location>
        <topology evidence="2">Multi-pass membrane protein</topology>
    </subcellularLocation>
</comment>
<comment type="miscellaneous">
    <text evidence="1">Heme 1 (or BL or b562) is low-potential and absorbs at about 562 nm, and heme 2 (or BH or b566) is high-potential and absorbs at about 566 nm.</text>
</comment>
<comment type="similarity">
    <text evidence="3">Belongs to the cytochrome b family.</text>
</comment>
<comment type="caution">
    <text evidence="2">The full-length protein contains only eight transmembrane helices, not nine as predicted by bioinformatics tools.</text>
</comment>
<organism>
    <name type="scientific">Megalops atlanticus</name>
    <name type="common">Tarpon</name>
    <name type="synonym">Clupea gigantea</name>
    <dbReference type="NCBI Taxonomy" id="7932"/>
    <lineage>
        <taxon>Eukaryota</taxon>
        <taxon>Metazoa</taxon>
        <taxon>Chordata</taxon>
        <taxon>Craniata</taxon>
        <taxon>Vertebrata</taxon>
        <taxon>Euteleostomi</taxon>
        <taxon>Actinopterygii</taxon>
        <taxon>Neopterygii</taxon>
        <taxon>Teleostei</taxon>
        <taxon>Elopiformes</taxon>
        <taxon>Megalopidae</taxon>
        <taxon>Megalops</taxon>
    </lineage>
</organism>
<sequence length="102" mass="11453">FGSLLGLCLATQILTGLFLAMHYTSDISTAFSSVTHICRDVNYGWLIRNIHANGASFFFICIYLHIGRGLYYGSYLYKETWNIGVVLLLLVMMTAFVGYVLP</sequence>
<feature type="chain" id="PRO_0000061166" description="Cytochrome b">
    <location>
        <begin position="1" status="less than"/>
        <end position="102" status="greater than"/>
    </location>
</feature>
<feature type="transmembrane region" description="Helical" evidence="3">
    <location>
        <begin position="1"/>
        <end position="21"/>
    </location>
</feature>
<feature type="transmembrane region" description="Helical" evidence="2">
    <location>
        <begin position="45"/>
        <end position="66"/>
    </location>
</feature>
<feature type="transmembrane region" description="Helical" evidence="3">
    <location>
        <begin position="81"/>
        <end position="101"/>
    </location>
</feature>
<feature type="binding site" description="axial binding residue" evidence="2">
    <location>
        <position position="51"/>
    </location>
    <ligand>
        <name>heme b</name>
        <dbReference type="ChEBI" id="CHEBI:60344"/>
        <label>b562</label>
    </ligand>
    <ligandPart>
        <name>Fe</name>
        <dbReference type="ChEBI" id="CHEBI:18248"/>
    </ligandPart>
</feature>
<feature type="binding site" description="axial binding residue" evidence="2">
    <location>
        <position position="65"/>
    </location>
    <ligand>
        <name>heme b</name>
        <dbReference type="ChEBI" id="CHEBI:60344"/>
        <label>b566</label>
    </ligand>
    <ligandPart>
        <name>Fe</name>
        <dbReference type="ChEBI" id="CHEBI:18248"/>
    </ligandPart>
</feature>
<feature type="non-terminal residue">
    <location>
        <position position="1"/>
    </location>
</feature>
<feature type="non-terminal residue">
    <location>
        <position position="102"/>
    </location>
</feature>